<feature type="chain" id="PRO_0000188354" description="Glycerol-3-phosphate acyltransferase 2">
    <location>
        <begin position="1"/>
        <end position="210"/>
    </location>
</feature>
<feature type="transmembrane region" description="Helical" evidence="1">
    <location>
        <begin position="4"/>
        <end position="24"/>
    </location>
</feature>
<feature type="transmembrane region" description="Helical" evidence="1">
    <location>
        <begin position="54"/>
        <end position="74"/>
    </location>
</feature>
<feature type="transmembrane region" description="Helical" evidence="1">
    <location>
        <begin position="82"/>
        <end position="102"/>
    </location>
</feature>
<feature type="transmembrane region" description="Helical" evidence="1">
    <location>
        <begin position="114"/>
        <end position="134"/>
    </location>
</feature>
<feature type="transmembrane region" description="Helical" evidence="1">
    <location>
        <begin position="141"/>
        <end position="161"/>
    </location>
</feature>
<feature type="transmembrane region" description="Helical" evidence="1">
    <location>
        <begin position="163"/>
        <end position="183"/>
    </location>
</feature>
<protein>
    <recommendedName>
        <fullName evidence="1">Glycerol-3-phosphate acyltransferase 2</fullName>
    </recommendedName>
    <alternativeName>
        <fullName evidence="1">Acyl-PO4 G3P acyltransferase 2</fullName>
    </alternativeName>
    <alternativeName>
        <fullName evidence="1">Acyl-phosphate--glycerol-3-phosphate acyltransferase 2</fullName>
    </alternativeName>
    <alternativeName>
        <fullName evidence="1">G3P acyltransferase 2</fullName>
        <shortName evidence="1">GPAT 2</shortName>
        <ecNumber evidence="1">2.3.1.275</ecNumber>
    </alternativeName>
    <alternativeName>
        <fullName evidence="1">Lysophosphatidic acid synthase 2</fullName>
        <shortName evidence="1">LPA synthase 2</shortName>
    </alternativeName>
</protein>
<accession>Q3Z7W1</accession>
<gene>
    <name evidence="1" type="primary">plsY2</name>
    <name type="ordered locus">DET0965</name>
</gene>
<keyword id="KW-1003">Cell membrane</keyword>
<keyword id="KW-0444">Lipid biosynthesis</keyword>
<keyword id="KW-0443">Lipid metabolism</keyword>
<keyword id="KW-0472">Membrane</keyword>
<keyword id="KW-0594">Phospholipid biosynthesis</keyword>
<keyword id="KW-1208">Phospholipid metabolism</keyword>
<keyword id="KW-0808">Transferase</keyword>
<keyword id="KW-0812">Transmembrane</keyword>
<keyword id="KW-1133">Transmembrane helix</keyword>
<comment type="function">
    <text evidence="1">Catalyzes the transfer of an acyl group from acyl-phosphate (acyl-PO(4)) to glycerol-3-phosphate (G3P) to form lysophosphatidic acid (LPA). This enzyme utilizes acyl-phosphate as fatty acyl donor, but not acyl-CoA or acyl-ACP.</text>
</comment>
<comment type="catalytic activity">
    <reaction evidence="1">
        <text>an acyl phosphate + sn-glycerol 3-phosphate = a 1-acyl-sn-glycero-3-phosphate + phosphate</text>
        <dbReference type="Rhea" id="RHEA:34075"/>
        <dbReference type="ChEBI" id="CHEBI:43474"/>
        <dbReference type="ChEBI" id="CHEBI:57597"/>
        <dbReference type="ChEBI" id="CHEBI:57970"/>
        <dbReference type="ChEBI" id="CHEBI:59918"/>
        <dbReference type="EC" id="2.3.1.275"/>
    </reaction>
</comment>
<comment type="pathway">
    <text evidence="1">Lipid metabolism; phospholipid metabolism.</text>
</comment>
<comment type="subunit">
    <text evidence="1">Probably interacts with PlsX.</text>
</comment>
<comment type="subcellular location">
    <subcellularLocation>
        <location evidence="1">Cell membrane</location>
        <topology evidence="1">Multi-pass membrane protein</topology>
    </subcellularLocation>
</comment>
<comment type="similarity">
    <text evidence="1">Belongs to the PlsY family.</text>
</comment>
<name>PLSY2_DEHM1</name>
<dbReference type="EC" id="2.3.1.275" evidence="1"/>
<dbReference type="EMBL" id="CP000027">
    <property type="protein sequence ID" value="AAW39729.1"/>
    <property type="molecule type" value="Genomic_DNA"/>
</dbReference>
<dbReference type="RefSeq" id="WP_010936667.1">
    <property type="nucleotide sequence ID" value="NC_002936.3"/>
</dbReference>
<dbReference type="SMR" id="Q3Z7W1"/>
<dbReference type="STRING" id="243164.DET0965"/>
<dbReference type="GeneID" id="3229691"/>
<dbReference type="KEGG" id="det:DET0965"/>
<dbReference type="eggNOG" id="COG0344">
    <property type="taxonomic scope" value="Bacteria"/>
</dbReference>
<dbReference type="HOGENOM" id="CLU_081254_7_1_0"/>
<dbReference type="InParanoid" id="Q3Z7W1"/>
<dbReference type="UniPathway" id="UPA00085"/>
<dbReference type="Proteomes" id="UP000008289">
    <property type="component" value="Chromosome"/>
</dbReference>
<dbReference type="GO" id="GO:0005886">
    <property type="term" value="C:plasma membrane"/>
    <property type="evidence" value="ECO:0007669"/>
    <property type="project" value="UniProtKB-SubCell"/>
</dbReference>
<dbReference type="GO" id="GO:0043772">
    <property type="term" value="F:acyl-phosphate glycerol-3-phosphate acyltransferase activity"/>
    <property type="evidence" value="ECO:0007669"/>
    <property type="project" value="UniProtKB-UniRule"/>
</dbReference>
<dbReference type="GO" id="GO:0008654">
    <property type="term" value="P:phospholipid biosynthetic process"/>
    <property type="evidence" value="ECO:0007669"/>
    <property type="project" value="UniProtKB-UniRule"/>
</dbReference>
<dbReference type="HAMAP" id="MF_01043">
    <property type="entry name" value="PlsY"/>
    <property type="match status" value="1"/>
</dbReference>
<dbReference type="InterPro" id="IPR003811">
    <property type="entry name" value="G3P_acylTferase_PlsY"/>
</dbReference>
<dbReference type="NCBIfam" id="NF010990">
    <property type="entry name" value="PRK14414.1"/>
    <property type="match status" value="1"/>
</dbReference>
<dbReference type="PANTHER" id="PTHR30309:SF0">
    <property type="entry name" value="GLYCEROL-3-PHOSPHATE ACYLTRANSFERASE-RELATED"/>
    <property type="match status" value="1"/>
</dbReference>
<dbReference type="PANTHER" id="PTHR30309">
    <property type="entry name" value="INNER MEMBRANE PROTEIN YGIH"/>
    <property type="match status" value="1"/>
</dbReference>
<dbReference type="Pfam" id="PF02660">
    <property type="entry name" value="G3P_acyltransf"/>
    <property type="match status" value="1"/>
</dbReference>
<dbReference type="SMART" id="SM01207">
    <property type="entry name" value="G3P_acyltransf"/>
    <property type="match status" value="1"/>
</dbReference>
<proteinExistence type="inferred from homology"/>
<organism>
    <name type="scientific">Dehalococcoides mccartyi (strain ATCC BAA-2266 / KCTC 15142 / 195)</name>
    <name type="common">Dehalococcoides ethenogenes (strain 195)</name>
    <dbReference type="NCBI Taxonomy" id="243164"/>
    <lineage>
        <taxon>Bacteria</taxon>
        <taxon>Bacillati</taxon>
        <taxon>Chloroflexota</taxon>
        <taxon>Dehalococcoidia</taxon>
        <taxon>Dehalococcoidales</taxon>
        <taxon>Dehalococcoidaceae</taxon>
        <taxon>Dehalococcoides</taxon>
    </lineage>
</organism>
<reference key="1">
    <citation type="journal article" date="2005" name="Science">
        <title>Genome sequence of the PCE-dechlorinating bacterium Dehalococcoides ethenogenes.</title>
        <authorList>
            <person name="Seshadri R."/>
            <person name="Adrian L."/>
            <person name="Fouts D.E."/>
            <person name="Eisen J.A."/>
            <person name="Phillippy A.M."/>
            <person name="Methe B.A."/>
            <person name="Ward N.L."/>
            <person name="Nelson W.C."/>
            <person name="DeBoy R.T."/>
            <person name="Khouri H.M."/>
            <person name="Kolonay J.F."/>
            <person name="Dodson R.J."/>
            <person name="Daugherty S.C."/>
            <person name="Brinkac L.M."/>
            <person name="Sullivan S.A."/>
            <person name="Madupu R."/>
            <person name="Nelson K.E."/>
            <person name="Kang K.H."/>
            <person name="Impraim M."/>
            <person name="Tran K."/>
            <person name="Robinson J.M."/>
            <person name="Forberger H.A."/>
            <person name="Fraser C.M."/>
            <person name="Zinder S.H."/>
            <person name="Heidelberg J.F."/>
        </authorList>
    </citation>
    <scope>NUCLEOTIDE SEQUENCE [LARGE SCALE GENOMIC DNA]</scope>
    <source>
        <strain>ATCC BAA-2266 / KCTC 15142 / 195</strain>
    </source>
</reference>
<sequence>MNSLIMVIIALIAAYFIGSTPAPYLAGRIFKGIDIRTVGSKNMGSMNVFYNVGFWPGILVLAVDIGKGALAMAVANWLGEGLGIQMLCALMAIAGHNYPVWLKFKGGKGGATAIGILAYLMPEGIPIYIACFLVLMAITRFPTLSYGISFLSFILVAWLGQHDLGKVLFSLLVVMIPIIMYIPRMKEIKNKAGSGNAKRAIFRKNLKERL</sequence>
<evidence type="ECO:0000255" key="1">
    <source>
        <dbReference type="HAMAP-Rule" id="MF_01043"/>
    </source>
</evidence>